<dbReference type="EC" id="1.13.12.13"/>
<dbReference type="EMBL" id="AB030246">
    <property type="protein sequence ID" value="BAB13776.1"/>
    <property type="molecule type" value="mRNA"/>
</dbReference>
<dbReference type="PDB" id="5B0U">
    <property type="method" value="X-ray"/>
    <property type="resolution" value="1.71 A"/>
    <property type="chains" value="A/B=28-196"/>
</dbReference>
<dbReference type="PDB" id="5IBO">
    <property type="method" value="X-ray"/>
    <property type="resolution" value="1.95 A"/>
    <property type="chains" value="A/B=28-196"/>
</dbReference>
<dbReference type="PDB" id="7SNR">
    <property type="method" value="X-ray"/>
    <property type="resolution" value="2.00 A"/>
    <property type="chains" value="A/B=28-196"/>
</dbReference>
<dbReference type="PDB" id="7SNS">
    <property type="method" value="X-ray"/>
    <property type="resolution" value="1.55 A"/>
    <property type="chains" value="A/B/C/D=28-196"/>
</dbReference>
<dbReference type="PDB" id="7SNT">
    <property type="method" value="X-ray"/>
    <property type="resolution" value="2.20 A"/>
    <property type="chains" value="A/B=28-196"/>
</dbReference>
<dbReference type="PDB" id="7SNW">
    <property type="method" value="X-ray"/>
    <property type="resolution" value="1.80 A"/>
    <property type="chains" value="A/B/C=28-196"/>
</dbReference>
<dbReference type="PDB" id="7VSX">
    <property type="method" value="X-ray"/>
    <property type="resolution" value="1.70 A"/>
    <property type="chains" value="A=28-196"/>
</dbReference>
<dbReference type="PDB" id="8AQ6">
    <property type="method" value="X-ray"/>
    <property type="resolution" value="1.69 A"/>
    <property type="chains" value="A/B/C/D/E/F/G/H=28-196"/>
</dbReference>
<dbReference type="PDB" id="8AQH">
    <property type="method" value="X-ray"/>
    <property type="resolution" value="2.80 A"/>
    <property type="chains" value="A/B=28-196"/>
</dbReference>
<dbReference type="PDB" id="8AQI">
    <property type="method" value="X-ray"/>
    <property type="resolution" value="1.99 A"/>
    <property type="chains" value="A/B/C/D/E/F/G/H=28-196"/>
</dbReference>
<dbReference type="PDB" id="8HCQ">
    <property type="method" value="EM"/>
    <property type="resolution" value="3.01 A"/>
    <property type="chains" value="R=27-184"/>
</dbReference>
<dbReference type="PDB" id="8HCX">
    <property type="method" value="EM"/>
    <property type="resolution" value="3.50 A"/>
    <property type="chains" value="C=27-184"/>
</dbReference>
<dbReference type="PDB" id="8HNK">
    <property type="method" value="EM"/>
    <property type="resolution" value="3.01 A"/>
    <property type="chains" value="R=27-184"/>
</dbReference>
<dbReference type="PDB" id="8HNL">
    <property type="method" value="EM"/>
    <property type="resolution" value="2.98 A"/>
    <property type="chains" value="R=27-184"/>
</dbReference>
<dbReference type="PDB" id="8HNM">
    <property type="method" value="EM"/>
    <property type="resolution" value="2.94 A"/>
    <property type="chains" value="R=27-184"/>
</dbReference>
<dbReference type="PDB" id="8JPN">
    <property type="method" value="EM"/>
    <property type="resolution" value="2.90 A"/>
    <property type="chains" value="R=28-184"/>
</dbReference>
<dbReference type="PDB" id="8K2X">
    <property type="method" value="EM"/>
    <property type="resolution" value="3.20 A"/>
    <property type="chains" value="R=27-184"/>
</dbReference>
<dbReference type="PDB" id="8WJX">
    <property type="method" value="EM"/>
    <property type="resolution" value="3.20 A"/>
    <property type="chains" value="R=28-183"/>
</dbReference>
<dbReference type="PDBsum" id="5B0U"/>
<dbReference type="PDBsum" id="5IBO"/>
<dbReference type="PDBsum" id="7SNR"/>
<dbReference type="PDBsum" id="7SNS"/>
<dbReference type="PDBsum" id="7SNT"/>
<dbReference type="PDBsum" id="7SNW"/>
<dbReference type="PDBsum" id="7VSX"/>
<dbReference type="PDBsum" id="8AQ6"/>
<dbReference type="PDBsum" id="8AQH"/>
<dbReference type="PDBsum" id="8AQI"/>
<dbReference type="PDBsum" id="8HCQ"/>
<dbReference type="PDBsum" id="8HCX"/>
<dbReference type="PDBsum" id="8HNK"/>
<dbReference type="PDBsum" id="8HNL"/>
<dbReference type="PDBsum" id="8HNM"/>
<dbReference type="PDBsum" id="8JPN"/>
<dbReference type="PDBsum" id="8K2X"/>
<dbReference type="PDBsum" id="8WJX"/>
<dbReference type="EMDB" id="EMD-34663"/>
<dbReference type="EMDB" id="EMD-34667"/>
<dbReference type="EMDB" id="EMD-34914"/>
<dbReference type="EMDB" id="EMD-34915"/>
<dbReference type="EMDB" id="EMD-34916"/>
<dbReference type="EMDB" id="EMD-36484"/>
<dbReference type="EMDB" id="EMD-36842"/>
<dbReference type="SMR" id="Q9GV45"/>
<dbReference type="BindingDB" id="Q9GV45"/>
<dbReference type="KEGG" id="ag:BAB13776"/>
<dbReference type="BRENDA" id="1.13.12.13">
    <property type="organism ID" value="4421"/>
</dbReference>
<dbReference type="GO" id="GO:0005576">
    <property type="term" value="C:extracellular region"/>
    <property type="evidence" value="ECO:0007669"/>
    <property type="project" value="UniProtKB-SubCell"/>
</dbReference>
<dbReference type="GO" id="GO:0033756">
    <property type="term" value="F:Oplophorus-luciferin 2-monooxygenase activity"/>
    <property type="evidence" value="ECO:0000314"/>
    <property type="project" value="UniProtKB"/>
</dbReference>
<dbReference type="GO" id="GO:0008218">
    <property type="term" value="P:bioluminescence"/>
    <property type="evidence" value="ECO:0007669"/>
    <property type="project" value="UniProtKB-KW"/>
</dbReference>
<dbReference type="InterPro" id="IPR012674">
    <property type="entry name" value="Calycin"/>
</dbReference>
<dbReference type="SUPFAM" id="SSF50814">
    <property type="entry name" value="Lipocalins"/>
    <property type="match status" value="1"/>
</dbReference>
<protein>
    <recommendedName>
        <fullName>Oplophorus-luciferin 2-monooxygenase catalytic subunit</fullName>
    </recommendedName>
    <alternativeName>
        <fullName>19kOLase</fullName>
        <ecNumber>1.13.12.13</ecNumber>
    </alternativeName>
</protein>
<comment type="function">
    <text evidence="1">Catalytic subunit of oplophorus-luciferin 2-monooxygenase. Oxidoreductase that converts coelenterazine (the oplophorus luciferin) to coelenteramide under emission of blue light with a maximum at 454 nm. Is also active with bisdeoxycoelenterazine.</text>
</comment>
<comment type="catalytic activity">
    <reaction evidence="1 2 3">
        <text>coelenterazine + O2 = coelenteramide + hnu + CO2</text>
        <dbReference type="Rhea" id="RHEA:20417"/>
        <dbReference type="ChEBI" id="CHEBI:2311"/>
        <dbReference type="ChEBI" id="CHEBI:15379"/>
        <dbReference type="ChEBI" id="CHEBI:16526"/>
        <dbReference type="ChEBI" id="CHEBI:30212"/>
        <dbReference type="ChEBI" id="CHEBI:41487"/>
        <dbReference type="EC" id="1.13.12.13"/>
    </reaction>
</comment>
<comment type="activity regulation">
    <text evidence="2">Inhibited by micromolar Cu(2+).</text>
</comment>
<comment type="biophysicochemical properties">
    <kinetics>
        <KM evidence="2 3">3.73 uM for coelenterazine</KM>
        <KM evidence="2 3">1.3 uM for bis-coelenterazine</KM>
    </kinetics>
    <phDependence>
        <text evidence="2 3">Optimum pH is 8-9.</text>
    </phDependence>
    <temperatureDependence>
        <text evidence="2 3">Optimum temperature is 40 degrees Celsius.</text>
    </temperatureDependence>
</comment>
<comment type="subunit">
    <text evidence="1">Heterotetramer of a catalytic 19 kDa and a non-catalytic 35 kDa subunit.</text>
</comment>
<comment type="subcellular location">
    <subcellularLocation>
        <location evidence="4">Secreted</location>
    </subcellularLocation>
</comment>
<comment type="miscellaneous">
    <text>The shrimp has luminous glands at the base of its antennae and legs, and ejects a cloud of brightly luminescent secretion from the base of its antennae upon stimulation.</text>
</comment>
<proteinExistence type="evidence at protein level"/>
<organism>
    <name type="scientific">Oplophorus gracilirostris</name>
    <name type="common">Luminous shrimp</name>
    <dbReference type="NCBI Taxonomy" id="727944"/>
    <lineage>
        <taxon>Eukaryota</taxon>
        <taxon>Metazoa</taxon>
        <taxon>Ecdysozoa</taxon>
        <taxon>Arthropoda</taxon>
        <taxon>Crustacea</taxon>
        <taxon>Multicrustacea</taxon>
        <taxon>Malacostraca</taxon>
        <taxon>Eumalacostraca</taxon>
        <taxon>Eucarida</taxon>
        <taxon>Decapoda</taxon>
        <taxon>Pleocyemata</taxon>
        <taxon>Caridea</taxon>
        <taxon>Oplophoroidea</taxon>
        <taxon>Oplophoridae</taxon>
        <taxon>Oplophorus</taxon>
    </lineage>
</organism>
<sequence>MAYSTLFIIALTAVVTQASSTQKSNLTFTLADFVGDWQQTAGYNQDQVLEQGGLSSLFQALGVSVTPIQKVVLSGENGLKADIHVIIPYEGLSGFQMGLIEMIFKVVYPVDDHHFKIILHYGTLVIDGVTPNMIDYFGRPYPGIAVFDGKQITVTGTLWNGNKIYDERLINPDGSLLFRVTINGVTGWRLCENILA</sequence>
<keyword id="KW-0002">3D-structure</keyword>
<keyword id="KW-0903">Direct protein sequencing</keyword>
<keyword id="KW-0455">Luminescence</keyword>
<keyword id="KW-0560">Oxidoreductase</keyword>
<keyword id="KW-0964">Secreted</keyword>
<keyword id="KW-0732">Signal</keyword>
<feature type="signal peptide" evidence="4">
    <location>
        <begin position="1"/>
        <end position="27"/>
    </location>
</feature>
<feature type="chain" id="PRO_0000418820" description="Oplophorus-luciferin 2-monooxygenase catalytic subunit">
    <location>
        <begin position="28"/>
        <end position="196"/>
    </location>
</feature>
<feature type="helix" evidence="5">
    <location>
        <begin position="30"/>
        <end position="33"/>
    </location>
</feature>
<feature type="strand" evidence="5">
    <location>
        <begin position="35"/>
        <end position="44"/>
    </location>
</feature>
<feature type="helix" evidence="5">
    <location>
        <begin position="45"/>
        <end position="51"/>
    </location>
</feature>
<feature type="helix" evidence="5">
    <location>
        <begin position="57"/>
        <end position="61"/>
    </location>
</feature>
<feature type="strand" evidence="5">
    <location>
        <begin position="68"/>
        <end position="73"/>
    </location>
</feature>
<feature type="strand" evidence="5">
    <location>
        <begin position="75"/>
        <end position="92"/>
    </location>
</feature>
<feature type="helix" evidence="5">
    <location>
        <begin position="94"/>
        <end position="104"/>
    </location>
</feature>
<feature type="strand" evidence="5">
    <location>
        <begin position="108"/>
        <end position="111"/>
    </location>
</feature>
<feature type="strand" evidence="5">
    <location>
        <begin position="114"/>
        <end position="125"/>
    </location>
</feature>
<feature type="strand" evidence="5">
    <location>
        <begin position="127"/>
        <end position="130"/>
    </location>
</feature>
<feature type="strand" evidence="5">
    <location>
        <begin position="132"/>
        <end position="136"/>
    </location>
</feature>
<feature type="strand" evidence="5">
    <location>
        <begin position="139"/>
        <end position="147"/>
    </location>
</feature>
<feature type="strand" evidence="5">
    <location>
        <begin position="149"/>
        <end position="157"/>
    </location>
</feature>
<feature type="turn" evidence="6">
    <location>
        <begin position="159"/>
        <end position="161"/>
    </location>
</feature>
<feature type="strand" evidence="5">
    <location>
        <begin position="163"/>
        <end position="170"/>
    </location>
</feature>
<feature type="strand" evidence="5">
    <location>
        <begin position="176"/>
        <end position="182"/>
    </location>
</feature>
<feature type="strand" evidence="5">
    <location>
        <begin position="185"/>
        <end position="193"/>
    </location>
</feature>
<reference key="1">
    <citation type="journal article" date="2000" name="FEBS Lett.">
        <title>Secretional luciferase of the luminous shrimp Oplophorus gracilirostris: cDNA cloning of a novel imidazopyrazinone luciferase(1).</title>
        <authorList>
            <person name="Inouye S."/>
            <person name="Watanabe K."/>
            <person name="Nakamura H."/>
            <person name="Shimomura O."/>
        </authorList>
    </citation>
    <scope>NUCLEOTIDE SEQUENCE [MRNA]</scope>
    <scope>PARTIAL PROTEIN SEQUENCE</scope>
    <scope>CATALYTIC ACTIVITY</scope>
    <scope>FUNCTION</scope>
    <scope>SUBUNIT</scope>
</reference>
<reference key="2">
    <citation type="journal article" date="1978" name="Biochemistry">
        <title>Properties and reaction mechanism of the bioluminescence system of the deep-sea shrimp Oplophorus gracilorostris.</title>
        <authorList>
            <person name="Shimomura O."/>
            <person name="Masugi T."/>
            <person name="Johnson F.H."/>
            <person name="Haneda Y."/>
        </authorList>
    </citation>
    <scope>CATALYTIC ACTIVITY</scope>
    <scope>BIOPHYSICOCHEMICAL PROPERTIES</scope>
</reference>
<reference key="3">
    <citation type="journal article" date="2007" name="Protein Expr. Purif.">
        <title>Overexpression, purification and characterization of the catalytic component of Oplophorus luciferase in the deep-sea shrimp, Oplophorus gracilirostris.</title>
        <authorList>
            <person name="Inouye S."/>
            <person name="Sasaki S."/>
        </authorList>
    </citation>
    <scope>CATALYTIC ACTIVITY</scope>
    <scope>ACTIVITY REGULATION</scope>
    <scope>BIOPHYSICOCHEMICAL PROPERTIES</scope>
</reference>
<evidence type="ECO:0000269" key="1">
    <source>
    </source>
</evidence>
<evidence type="ECO:0000269" key="2">
    <source>
    </source>
</evidence>
<evidence type="ECO:0000269" key="3">
    <source>
    </source>
</evidence>
<evidence type="ECO:0000305" key="4"/>
<evidence type="ECO:0007829" key="5">
    <source>
        <dbReference type="PDB" id="7SNS"/>
    </source>
</evidence>
<evidence type="ECO:0007829" key="6">
    <source>
        <dbReference type="PDB" id="8AQH"/>
    </source>
</evidence>
<name>LUCI_OPLGR</name>
<accession>Q9GV45</accession>